<dbReference type="EMBL" id="CP001101">
    <property type="protein sequence ID" value="ACE03158.1"/>
    <property type="molecule type" value="Genomic_DNA"/>
</dbReference>
<dbReference type="SMR" id="B3EKI0"/>
<dbReference type="STRING" id="331678.Cphamn1_0184"/>
<dbReference type="KEGG" id="cpb:Cphamn1_0184"/>
<dbReference type="eggNOG" id="COG0333">
    <property type="taxonomic scope" value="Bacteria"/>
</dbReference>
<dbReference type="HOGENOM" id="CLU_129084_1_3_10"/>
<dbReference type="OrthoDB" id="9812874at2"/>
<dbReference type="GO" id="GO:0015934">
    <property type="term" value="C:large ribosomal subunit"/>
    <property type="evidence" value="ECO:0007669"/>
    <property type="project" value="InterPro"/>
</dbReference>
<dbReference type="GO" id="GO:0003735">
    <property type="term" value="F:structural constituent of ribosome"/>
    <property type="evidence" value="ECO:0007669"/>
    <property type="project" value="InterPro"/>
</dbReference>
<dbReference type="GO" id="GO:0006412">
    <property type="term" value="P:translation"/>
    <property type="evidence" value="ECO:0007669"/>
    <property type="project" value="UniProtKB-UniRule"/>
</dbReference>
<dbReference type="HAMAP" id="MF_00340">
    <property type="entry name" value="Ribosomal_bL32"/>
    <property type="match status" value="1"/>
</dbReference>
<dbReference type="InterPro" id="IPR002677">
    <property type="entry name" value="Ribosomal_bL32"/>
</dbReference>
<dbReference type="InterPro" id="IPR044957">
    <property type="entry name" value="Ribosomal_bL32_bact"/>
</dbReference>
<dbReference type="InterPro" id="IPR011332">
    <property type="entry name" value="Ribosomal_zn-bd"/>
</dbReference>
<dbReference type="NCBIfam" id="TIGR01031">
    <property type="entry name" value="rpmF_bact"/>
    <property type="match status" value="1"/>
</dbReference>
<dbReference type="PANTHER" id="PTHR35534">
    <property type="entry name" value="50S RIBOSOMAL PROTEIN L32"/>
    <property type="match status" value="1"/>
</dbReference>
<dbReference type="PANTHER" id="PTHR35534:SF1">
    <property type="entry name" value="LARGE RIBOSOMAL SUBUNIT PROTEIN BL32"/>
    <property type="match status" value="1"/>
</dbReference>
<dbReference type="Pfam" id="PF01783">
    <property type="entry name" value="Ribosomal_L32p"/>
    <property type="match status" value="1"/>
</dbReference>
<dbReference type="SUPFAM" id="SSF57829">
    <property type="entry name" value="Zn-binding ribosomal proteins"/>
    <property type="match status" value="1"/>
</dbReference>
<comment type="similarity">
    <text evidence="1">Belongs to the bacterial ribosomal protein bL32 family.</text>
</comment>
<organism>
    <name type="scientific">Chlorobium phaeobacteroides (strain BS1)</name>
    <dbReference type="NCBI Taxonomy" id="331678"/>
    <lineage>
        <taxon>Bacteria</taxon>
        <taxon>Pseudomonadati</taxon>
        <taxon>Chlorobiota</taxon>
        <taxon>Chlorobiia</taxon>
        <taxon>Chlorobiales</taxon>
        <taxon>Chlorobiaceae</taxon>
        <taxon>Chlorobium/Pelodictyon group</taxon>
        <taxon>Chlorobium</taxon>
    </lineage>
</organism>
<reference key="1">
    <citation type="submission" date="2008-06" db="EMBL/GenBank/DDBJ databases">
        <title>Complete sequence of Chlorobium phaeobacteroides BS1.</title>
        <authorList>
            <consortium name="US DOE Joint Genome Institute"/>
            <person name="Lucas S."/>
            <person name="Copeland A."/>
            <person name="Lapidus A."/>
            <person name="Glavina del Rio T."/>
            <person name="Dalin E."/>
            <person name="Tice H."/>
            <person name="Bruce D."/>
            <person name="Goodwin L."/>
            <person name="Pitluck S."/>
            <person name="Schmutz J."/>
            <person name="Larimer F."/>
            <person name="Land M."/>
            <person name="Hauser L."/>
            <person name="Kyrpides N."/>
            <person name="Ovchinnikova G."/>
            <person name="Li T."/>
            <person name="Liu Z."/>
            <person name="Zhao F."/>
            <person name="Overmann J."/>
            <person name="Bryant D.A."/>
            <person name="Richardson P."/>
        </authorList>
    </citation>
    <scope>NUCLEOTIDE SEQUENCE [LARGE SCALE GENOMIC DNA]</scope>
    <source>
        <strain>BS1</strain>
    </source>
</reference>
<sequence>MATPKAKVSKSRRDKRRAQFTARSKAAETVTCPNCGEPTLPHRACRHCGHYRGRAVTKKSSNS</sequence>
<protein>
    <recommendedName>
        <fullName evidence="1">Large ribosomal subunit protein bL32</fullName>
    </recommendedName>
    <alternativeName>
        <fullName evidence="3">50S ribosomal protein L32</fullName>
    </alternativeName>
</protein>
<proteinExistence type="inferred from homology"/>
<accession>B3EKI0</accession>
<name>RL32_CHLPB</name>
<evidence type="ECO:0000255" key="1">
    <source>
        <dbReference type="HAMAP-Rule" id="MF_00340"/>
    </source>
</evidence>
<evidence type="ECO:0000256" key="2">
    <source>
        <dbReference type="SAM" id="MobiDB-lite"/>
    </source>
</evidence>
<evidence type="ECO:0000305" key="3"/>
<feature type="chain" id="PRO_1000120105" description="Large ribosomal subunit protein bL32">
    <location>
        <begin position="1"/>
        <end position="63"/>
    </location>
</feature>
<feature type="region of interest" description="Disordered" evidence="2">
    <location>
        <begin position="1"/>
        <end position="23"/>
    </location>
</feature>
<feature type="compositionally biased region" description="Basic residues" evidence="2">
    <location>
        <begin position="7"/>
        <end position="18"/>
    </location>
</feature>
<gene>
    <name evidence="1" type="primary">rpmF</name>
    <name type="ordered locus">Cphamn1_0184</name>
</gene>
<keyword id="KW-0687">Ribonucleoprotein</keyword>
<keyword id="KW-0689">Ribosomal protein</keyword>